<accession>A5VK70</accession>
<feature type="chain" id="PRO_0000389771" description="Acetyl-coenzyme A carboxylase carboxyl transferase subunit beta">
    <location>
        <begin position="1"/>
        <end position="254"/>
    </location>
</feature>
<feature type="domain" description="CoA carboxyltransferase N-terminal" evidence="2">
    <location>
        <begin position="1"/>
        <end position="254"/>
    </location>
</feature>
<feature type="zinc finger region" description="C4-type" evidence="1">
    <location>
        <begin position="5"/>
        <end position="26"/>
    </location>
</feature>
<feature type="binding site" evidence="1">
    <location>
        <position position="5"/>
    </location>
    <ligand>
        <name>Zn(2+)</name>
        <dbReference type="ChEBI" id="CHEBI:29105"/>
    </ligand>
</feature>
<feature type="binding site" evidence="1">
    <location>
        <position position="8"/>
    </location>
    <ligand>
        <name>Zn(2+)</name>
        <dbReference type="ChEBI" id="CHEBI:29105"/>
    </ligand>
</feature>
<feature type="binding site" evidence="1">
    <location>
        <position position="23"/>
    </location>
    <ligand>
        <name>Zn(2+)</name>
        <dbReference type="ChEBI" id="CHEBI:29105"/>
    </ligand>
</feature>
<feature type="binding site" evidence="1">
    <location>
        <position position="26"/>
    </location>
    <ligand>
        <name>Zn(2+)</name>
        <dbReference type="ChEBI" id="CHEBI:29105"/>
    </ligand>
</feature>
<evidence type="ECO:0000255" key="1">
    <source>
        <dbReference type="HAMAP-Rule" id="MF_01395"/>
    </source>
</evidence>
<evidence type="ECO:0000255" key="2">
    <source>
        <dbReference type="PROSITE-ProRule" id="PRU01136"/>
    </source>
</evidence>
<organism>
    <name type="scientific">Limosilactobacillus reuteri (strain DSM 20016)</name>
    <name type="common">Lactobacillus reuteri</name>
    <dbReference type="NCBI Taxonomy" id="557436"/>
    <lineage>
        <taxon>Bacteria</taxon>
        <taxon>Bacillati</taxon>
        <taxon>Bacillota</taxon>
        <taxon>Bacilli</taxon>
        <taxon>Lactobacillales</taxon>
        <taxon>Lactobacillaceae</taxon>
        <taxon>Limosilactobacillus</taxon>
    </lineage>
</organism>
<sequence length="254" mass="28417">MWLRCPHCHQLLFAKQLTQYAVCPNCDYGLRIPARHRLSWLVDSFKEFDKDLQTKNPLHFPGYQEKISKLQRQTKLNDSVLTGEASINDQLFSLGIMDPTFIMGSLGTVTGEKITRLFEYATTHRQAVVLFTASGGARMQEGIMSLMQMAKVSQAINEHAAAGLLYIVVLTDPTTGGVTASFAMDGDIILAEPHALVGFAGRRVIEQTIHQQIPIDLQSAENILHHGFIDRIVKRQDEKKLLEWLLKTGSVANE</sequence>
<reference key="1">
    <citation type="journal article" date="2011" name="PLoS Genet.">
        <title>The evolution of host specialization in the vertebrate gut symbiont Lactobacillus reuteri.</title>
        <authorList>
            <person name="Frese S.A."/>
            <person name="Benson A.K."/>
            <person name="Tannock G.W."/>
            <person name="Loach D.M."/>
            <person name="Kim J."/>
            <person name="Zhang M."/>
            <person name="Oh P.L."/>
            <person name="Heng N.C."/>
            <person name="Patil P.B."/>
            <person name="Juge N."/>
            <person name="Mackenzie D.A."/>
            <person name="Pearson B.M."/>
            <person name="Lapidus A."/>
            <person name="Dalin E."/>
            <person name="Tice H."/>
            <person name="Goltsman E."/>
            <person name="Land M."/>
            <person name="Hauser L."/>
            <person name="Ivanova N."/>
            <person name="Kyrpides N.C."/>
            <person name="Walter J."/>
        </authorList>
    </citation>
    <scope>NUCLEOTIDE SEQUENCE [LARGE SCALE GENOMIC DNA]</scope>
    <source>
        <strain>DSM 20016</strain>
    </source>
</reference>
<protein>
    <recommendedName>
        <fullName evidence="1">Acetyl-coenzyme A carboxylase carboxyl transferase subunit beta</fullName>
        <shortName evidence="1">ACCase subunit beta</shortName>
        <shortName evidence="1">Acetyl-CoA carboxylase carboxyltransferase subunit beta</shortName>
        <ecNumber evidence="1">2.1.3.15</ecNumber>
    </recommendedName>
</protein>
<comment type="function">
    <text evidence="1">Component of the acetyl coenzyme A carboxylase (ACC) complex. Biotin carboxylase (BC) catalyzes the carboxylation of biotin on its carrier protein (BCCP) and then the CO(2) group is transferred by the transcarboxylase to acetyl-CoA to form malonyl-CoA.</text>
</comment>
<comment type="catalytic activity">
    <reaction evidence="1">
        <text>N(6)-carboxybiotinyl-L-lysyl-[protein] + acetyl-CoA = N(6)-biotinyl-L-lysyl-[protein] + malonyl-CoA</text>
        <dbReference type="Rhea" id="RHEA:54728"/>
        <dbReference type="Rhea" id="RHEA-COMP:10505"/>
        <dbReference type="Rhea" id="RHEA-COMP:10506"/>
        <dbReference type="ChEBI" id="CHEBI:57288"/>
        <dbReference type="ChEBI" id="CHEBI:57384"/>
        <dbReference type="ChEBI" id="CHEBI:83144"/>
        <dbReference type="ChEBI" id="CHEBI:83145"/>
        <dbReference type="EC" id="2.1.3.15"/>
    </reaction>
</comment>
<comment type="cofactor">
    <cofactor evidence="1">
        <name>Zn(2+)</name>
        <dbReference type="ChEBI" id="CHEBI:29105"/>
    </cofactor>
    <text evidence="1">Binds 1 zinc ion per subunit.</text>
</comment>
<comment type="pathway">
    <text evidence="1">Lipid metabolism; malonyl-CoA biosynthesis; malonyl-CoA from acetyl-CoA: step 1/1.</text>
</comment>
<comment type="subunit">
    <text evidence="1">Acetyl-CoA carboxylase is a heterohexamer composed of biotin carboxyl carrier protein (AccB), biotin carboxylase (AccC) and two subunits each of ACCase subunit alpha (AccA) and ACCase subunit beta (AccD).</text>
</comment>
<comment type="subcellular location">
    <subcellularLocation>
        <location evidence="1">Cytoplasm</location>
    </subcellularLocation>
</comment>
<comment type="similarity">
    <text evidence="1">Belongs to the AccD/PCCB family.</text>
</comment>
<dbReference type="EC" id="2.1.3.15" evidence="1"/>
<dbReference type="EMBL" id="CP000705">
    <property type="protein sequence ID" value="ABQ83244.1"/>
    <property type="molecule type" value="Genomic_DNA"/>
</dbReference>
<dbReference type="SMR" id="A5VK70"/>
<dbReference type="STRING" id="557436.Lreu_0983"/>
<dbReference type="KEGG" id="lre:Lreu_0983"/>
<dbReference type="eggNOG" id="COG0777">
    <property type="taxonomic scope" value="Bacteria"/>
</dbReference>
<dbReference type="HOGENOM" id="CLU_015486_1_1_9"/>
<dbReference type="UniPathway" id="UPA00655">
    <property type="reaction ID" value="UER00711"/>
</dbReference>
<dbReference type="Proteomes" id="UP000001991">
    <property type="component" value="Chromosome"/>
</dbReference>
<dbReference type="GO" id="GO:0009317">
    <property type="term" value="C:acetyl-CoA carboxylase complex"/>
    <property type="evidence" value="ECO:0007669"/>
    <property type="project" value="InterPro"/>
</dbReference>
<dbReference type="GO" id="GO:0003989">
    <property type="term" value="F:acetyl-CoA carboxylase activity"/>
    <property type="evidence" value="ECO:0007669"/>
    <property type="project" value="InterPro"/>
</dbReference>
<dbReference type="GO" id="GO:0005524">
    <property type="term" value="F:ATP binding"/>
    <property type="evidence" value="ECO:0007669"/>
    <property type="project" value="UniProtKB-KW"/>
</dbReference>
<dbReference type="GO" id="GO:0016743">
    <property type="term" value="F:carboxyl- or carbamoyltransferase activity"/>
    <property type="evidence" value="ECO:0007669"/>
    <property type="project" value="UniProtKB-UniRule"/>
</dbReference>
<dbReference type="GO" id="GO:0008270">
    <property type="term" value="F:zinc ion binding"/>
    <property type="evidence" value="ECO:0007669"/>
    <property type="project" value="UniProtKB-UniRule"/>
</dbReference>
<dbReference type="GO" id="GO:0006633">
    <property type="term" value="P:fatty acid biosynthetic process"/>
    <property type="evidence" value="ECO:0007669"/>
    <property type="project" value="UniProtKB-KW"/>
</dbReference>
<dbReference type="GO" id="GO:2001295">
    <property type="term" value="P:malonyl-CoA biosynthetic process"/>
    <property type="evidence" value="ECO:0007669"/>
    <property type="project" value="UniProtKB-UniRule"/>
</dbReference>
<dbReference type="Gene3D" id="3.90.226.10">
    <property type="entry name" value="2-enoyl-CoA Hydratase, Chain A, domain 1"/>
    <property type="match status" value="1"/>
</dbReference>
<dbReference type="HAMAP" id="MF_01395">
    <property type="entry name" value="AcetylCoA_CT_beta"/>
    <property type="match status" value="1"/>
</dbReference>
<dbReference type="InterPro" id="IPR034733">
    <property type="entry name" value="AcCoA_carboxyl_beta"/>
</dbReference>
<dbReference type="InterPro" id="IPR000438">
    <property type="entry name" value="Acetyl_CoA_COase_Trfase_b_su"/>
</dbReference>
<dbReference type="InterPro" id="IPR029045">
    <property type="entry name" value="ClpP/crotonase-like_dom_sf"/>
</dbReference>
<dbReference type="InterPro" id="IPR011762">
    <property type="entry name" value="COA_CT_N"/>
</dbReference>
<dbReference type="InterPro" id="IPR041010">
    <property type="entry name" value="Znf-ACC"/>
</dbReference>
<dbReference type="NCBIfam" id="TIGR00515">
    <property type="entry name" value="accD"/>
    <property type="match status" value="1"/>
</dbReference>
<dbReference type="PANTHER" id="PTHR42995">
    <property type="entry name" value="ACETYL-COENZYME A CARBOXYLASE CARBOXYL TRANSFERASE SUBUNIT BETA, CHLOROPLASTIC"/>
    <property type="match status" value="1"/>
</dbReference>
<dbReference type="PANTHER" id="PTHR42995:SF5">
    <property type="entry name" value="ACETYL-COENZYME A CARBOXYLASE CARBOXYL TRANSFERASE SUBUNIT BETA, CHLOROPLASTIC"/>
    <property type="match status" value="1"/>
</dbReference>
<dbReference type="Pfam" id="PF01039">
    <property type="entry name" value="Carboxyl_trans"/>
    <property type="match status" value="1"/>
</dbReference>
<dbReference type="Pfam" id="PF17848">
    <property type="entry name" value="Zn_ribbon_ACC"/>
    <property type="match status" value="1"/>
</dbReference>
<dbReference type="PRINTS" id="PR01070">
    <property type="entry name" value="ACCCTRFRASEB"/>
</dbReference>
<dbReference type="SUPFAM" id="SSF52096">
    <property type="entry name" value="ClpP/crotonase"/>
    <property type="match status" value="1"/>
</dbReference>
<dbReference type="PROSITE" id="PS50980">
    <property type="entry name" value="COA_CT_NTER"/>
    <property type="match status" value="1"/>
</dbReference>
<name>ACCD_LIMRD</name>
<keyword id="KW-0067">ATP-binding</keyword>
<keyword id="KW-0963">Cytoplasm</keyword>
<keyword id="KW-0275">Fatty acid biosynthesis</keyword>
<keyword id="KW-0276">Fatty acid metabolism</keyword>
<keyword id="KW-0444">Lipid biosynthesis</keyword>
<keyword id="KW-0443">Lipid metabolism</keyword>
<keyword id="KW-0479">Metal-binding</keyword>
<keyword id="KW-0547">Nucleotide-binding</keyword>
<keyword id="KW-1185">Reference proteome</keyword>
<keyword id="KW-0808">Transferase</keyword>
<keyword id="KW-0862">Zinc</keyword>
<keyword id="KW-0863">Zinc-finger</keyword>
<gene>
    <name evidence="1" type="primary">accD</name>
    <name type="ordered locus">Lreu_0983</name>
</gene>
<proteinExistence type="inferred from homology"/>